<comment type="function">
    <text>Receptor for endothelin-1. Mediates its action by association with G proteins that activate a phosphatidylinositol-calcium second messenger system. The rank order of binding affinities for ET-A is: ET1 &gt; ET2 &gt;&gt; ET3.</text>
</comment>
<comment type="subunit">
    <text evidence="1">Interacts with HDAC7 and KAT5.</text>
</comment>
<comment type="subcellular location">
    <subcellularLocation>
        <location>Cell membrane</location>
        <topology>Multi-pass membrane protein</topology>
    </subcellularLocation>
</comment>
<comment type="tissue specificity">
    <text>Predominantly expressed in vascular smooth muscle cells of a variety of issues, bronchial smooth muscle cells, myocardium, and the pituitary gland.</text>
</comment>
<comment type="similarity">
    <text evidence="4">Belongs to the G-protein coupled receptor 1 family. Endothelin receptor subfamily. EDNRA sub-subfamily.</text>
</comment>
<gene>
    <name evidence="6" type="primary">Ednra</name>
</gene>
<accession>P26684</accession>
<protein>
    <recommendedName>
        <fullName evidence="5">Endothelin-1 receptor</fullName>
    </recommendedName>
    <alternativeName>
        <fullName evidence="6">Endothelin receptor type A</fullName>
        <shortName>ET-A</shortName>
        <shortName>ET-AR</shortName>
    </alternativeName>
</protein>
<reference key="1">
    <citation type="journal article" date="1992" name="Endocrinology">
        <title>Distinct tissue distribution and cellular localization of two messenger ribonucleic acids encoding different subtypes of rat endothelin receptors.</title>
        <authorList>
            <person name="Hori S."/>
            <person name="Komatsu Y."/>
            <person name="Shigemoto R."/>
            <person name="Mizuno N."/>
            <person name="Nakanishi S."/>
        </authorList>
    </citation>
    <scope>NUCLEOTIDE SEQUENCE [MRNA]</scope>
    <source>
        <tissue>Lung</tissue>
    </source>
</reference>
<reference key="2">
    <citation type="journal article" date="1991" name="Proc. Natl. Acad. Sci. U.S.A.">
        <title>Cloning and functional expression of a vascular smooth muscle endothelin 1 receptor.</title>
        <authorList>
            <person name="Lin H.Y."/>
            <person name="Kaji E.H."/>
            <person name="Winkel G.K."/>
            <person name="Ives H.E."/>
            <person name="Lodish H.F."/>
        </authorList>
    </citation>
    <scope>NUCLEOTIDE SEQUENCE [MRNA]</scope>
</reference>
<dbReference type="EMBL" id="M60786">
    <property type="protein sequence ID" value="AAA41114.1"/>
    <property type="molecule type" value="mRNA"/>
</dbReference>
<dbReference type="PIR" id="A40440">
    <property type="entry name" value="A40440"/>
</dbReference>
<dbReference type="RefSeq" id="NP_036682.1">
    <property type="nucleotide sequence ID" value="NM_012550.2"/>
</dbReference>
<dbReference type="RefSeq" id="XP_008770693.1">
    <property type="nucleotide sequence ID" value="XM_008772471.1"/>
</dbReference>
<dbReference type="SMR" id="P26684"/>
<dbReference type="FunCoup" id="P26684">
    <property type="interactions" value="538"/>
</dbReference>
<dbReference type="STRING" id="10116.ENSRNOP00000054967"/>
<dbReference type="BindingDB" id="P26684"/>
<dbReference type="ChEMBL" id="CHEMBL4566"/>
<dbReference type="DrugCentral" id="P26684"/>
<dbReference type="GuidetoPHARMACOLOGY" id="219"/>
<dbReference type="GlyCosmos" id="P26684">
    <property type="glycosylation" value="2 sites, No reported glycans"/>
</dbReference>
<dbReference type="GlyGen" id="P26684">
    <property type="glycosylation" value="3 sites, 1 O-linked glycan (1 site)"/>
</dbReference>
<dbReference type="PhosphoSitePlus" id="P26684"/>
<dbReference type="SwissPalm" id="P26684"/>
<dbReference type="PaxDb" id="10116-ENSRNOP00000054967"/>
<dbReference type="GeneID" id="24326"/>
<dbReference type="KEGG" id="rno:24326"/>
<dbReference type="UCSC" id="RGD:2535">
    <property type="organism name" value="rat"/>
</dbReference>
<dbReference type="AGR" id="RGD:2535"/>
<dbReference type="CTD" id="1909"/>
<dbReference type="RGD" id="2535">
    <property type="gene designation" value="Ednra"/>
</dbReference>
<dbReference type="eggNOG" id="KOG3656">
    <property type="taxonomic scope" value="Eukaryota"/>
</dbReference>
<dbReference type="InParanoid" id="P26684"/>
<dbReference type="OrthoDB" id="10049706at2759"/>
<dbReference type="PhylomeDB" id="P26684"/>
<dbReference type="TreeFam" id="TF331292"/>
<dbReference type="Reactome" id="R-RNO-375276">
    <property type="pathway name" value="Peptide ligand-binding receptors"/>
</dbReference>
<dbReference type="Reactome" id="R-RNO-416476">
    <property type="pathway name" value="G alpha (q) signalling events"/>
</dbReference>
<dbReference type="PRO" id="PR:P26684"/>
<dbReference type="Proteomes" id="UP000002494">
    <property type="component" value="Unplaced"/>
</dbReference>
<dbReference type="GO" id="GO:0071944">
    <property type="term" value="C:cell periphery"/>
    <property type="evidence" value="ECO:0000266"/>
    <property type="project" value="RGD"/>
</dbReference>
<dbReference type="GO" id="GO:0031965">
    <property type="term" value="C:nuclear membrane"/>
    <property type="evidence" value="ECO:0000314"/>
    <property type="project" value="RGD"/>
</dbReference>
<dbReference type="GO" id="GO:0005886">
    <property type="term" value="C:plasma membrane"/>
    <property type="evidence" value="ECO:0000318"/>
    <property type="project" value="GO_Central"/>
</dbReference>
<dbReference type="GO" id="GO:0030315">
    <property type="term" value="C:T-tubule"/>
    <property type="evidence" value="ECO:0000314"/>
    <property type="project" value="RGD"/>
</dbReference>
<dbReference type="GO" id="GO:0004962">
    <property type="term" value="F:endothelin receptor activity"/>
    <property type="evidence" value="ECO:0000314"/>
    <property type="project" value="RGD"/>
</dbReference>
<dbReference type="GO" id="GO:0007193">
    <property type="term" value="P:adenylate cyclase-inhibiting G protein-coupled receptor signaling pathway"/>
    <property type="evidence" value="ECO:0000266"/>
    <property type="project" value="RGD"/>
</dbReference>
<dbReference type="GO" id="GO:0001525">
    <property type="term" value="P:angiogenesis"/>
    <property type="evidence" value="ECO:0000266"/>
    <property type="project" value="RGD"/>
</dbReference>
<dbReference type="GO" id="GO:0035904">
    <property type="term" value="P:aorta development"/>
    <property type="evidence" value="ECO:0000266"/>
    <property type="project" value="RGD"/>
</dbReference>
<dbReference type="GO" id="GO:0014824">
    <property type="term" value="P:artery smooth muscle contraction"/>
    <property type="evidence" value="ECO:0000266"/>
    <property type="project" value="RGD"/>
</dbReference>
<dbReference type="GO" id="GO:0003228">
    <property type="term" value="P:atrial cardiac muscle tissue development"/>
    <property type="evidence" value="ECO:0000266"/>
    <property type="project" value="RGD"/>
</dbReference>
<dbReference type="GO" id="GO:0048675">
    <property type="term" value="P:axon extension"/>
    <property type="evidence" value="ECO:0000266"/>
    <property type="project" value="RGD"/>
</dbReference>
<dbReference type="GO" id="GO:0007411">
    <property type="term" value="P:axon guidance"/>
    <property type="evidence" value="ECO:0000266"/>
    <property type="project" value="RGD"/>
</dbReference>
<dbReference type="GO" id="GO:0060385">
    <property type="term" value="P:axonogenesis involved in innervation"/>
    <property type="evidence" value="ECO:0000266"/>
    <property type="project" value="RGD"/>
</dbReference>
<dbReference type="GO" id="GO:0001974">
    <property type="term" value="P:blood vessel remodeling"/>
    <property type="evidence" value="ECO:0000266"/>
    <property type="project" value="RGD"/>
</dbReference>
<dbReference type="GO" id="GO:0001569">
    <property type="term" value="P:branching involved in blood vessel morphogenesis"/>
    <property type="evidence" value="ECO:0000266"/>
    <property type="project" value="RGD"/>
</dbReference>
<dbReference type="GO" id="GO:0070588">
    <property type="term" value="P:calcium ion transmembrane transport"/>
    <property type="evidence" value="ECO:0000266"/>
    <property type="project" value="RGD"/>
</dbReference>
<dbReference type="GO" id="GO:0141156">
    <property type="term" value="P:cAMP/PKA signal transduction"/>
    <property type="evidence" value="ECO:0000266"/>
    <property type="project" value="RGD"/>
</dbReference>
<dbReference type="GO" id="GO:0060070">
    <property type="term" value="P:canonical Wnt signaling pathway"/>
    <property type="evidence" value="ECO:0000266"/>
    <property type="project" value="RGD"/>
</dbReference>
<dbReference type="GO" id="GO:0003207">
    <property type="term" value="P:cardiac chamber formation"/>
    <property type="evidence" value="ECO:0000266"/>
    <property type="project" value="RGD"/>
</dbReference>
<dbReference type="GO" id="GO:0003253">
    <property type="term" value="P:cardiac neural crest cell migration involved in outflow tract morphogenesis"/>
    <property type="evidence" value="ECO:0000266"/>
    <property type="project" value="RGD"/>
</dbReference>
<dbReference type="GO" id="GO:0071372">
    <property type="term" value="P:cellular response to follicle-stimulating hormone stimulus"/>
    <property type="evidence" value="ECO:0000266"/>
    <property type="project" value="RGD"/>
</dbReference>
<dbReference type="GO" id="GO:0044751">
    <property type="term" value="P:cellular response to human chorionic gonadotropin stimulus"/>
    <property type="evidence" value="ECO:0000266"/>
    <property type="project" value="RGD"/>
</dbReference>
<dbReference type="GO" id="GO:0071373">
    <property type="term" value="P:cellular response to luteinizing hormone stimulus"/>
    <property type="evidence" value="ECO:0000266"/>
    <property type="project" value="RGD"/>
</dbReference>
<dbReference type="GO" id="GO:0071260">
    <property type="term" value="P:cellular response to mechanical stimulus"/>
    <property type="evidence" value="ECO:0000315"/>
    <property type="project" value="RGD"/>
</dbReference>
<dbReference type="GO" id="GO:0034599">
    <property type="term" value="P:cellular response to oxidative stress"/>
    <property type="evidence" value="ECO:0000266"/>
    <property type="project" value="RGD"/>
</dbReference>
<dbReference type="GO" id="GO:1904888">
    <property type="term" value="P:cranial skeletal system development"/>
    <property type="evidence" value="ECO:0000266"/>
    <property type="project" value="RGD"/>
</dbReference>
<dbReference type="GO" id="GO:0048066">
    <property type="term" value="P:developmental pigmentation"/>
    <property type="evidence" value="ECO:0000318"/>
    <property type="project" value="GO_Central"/>
</dbReference>
<dbReference type="GO" id="GO:0035050">
    <property type="term" value="P:embryonic heart tube development"/>
    <property type="evidence" value="ECO:0000266"/>
    <property type="project" value="RGD"/>
</dbReference>
<dbReference type="GO" id="GO:0048706">
    <property type="term" value="P:embryonic skeletal system development"/>
    <property type="evidence" value="ECO:0000266"/>
    <property type="project" value="RGD"/>
</dbReference>
<dbReference type="GO" id="GO:0086100">
    <property type="term" value="P:endothelin receptor signaling pathway"/>
    <property type="evidence" value="ECO:0000266"/>
    <property type="project" value="RGD"/>
</dbReference>
<dbReference type="GO" id="GO:0086101">
    <property type="term" value="P:endothelin receptor signaling pathway involved in heart process"/>
    <property type="evidence" value="ECO:0000266"/>
    <property type="project" value="RGD"/>
</dbReference>
<dbReference type="GO" id="GO:0048484">
    <property type="term" value="P:enteric nervous system development"/>
    <property type="evidence" value="ECO:0007669"/>
    <property type="project" value="InterPro"/>
</dbReference>
<dbReference type="GO" id="GO:0061028">
    <property type="term" value="P:establishment of endothelial barrier"/>
    <property type="evidence" value="ECO:0000266"/>
    <property type="project" value="RGD"/>
</dbReference>
<dbReference type="GO" id="GO:0060324">
    <property type="term" value="P:face development"/>
    <property type="evidence" value="ECO:0000266"/>
    <property type="project" value="RGD"/>
</dbReference>
<dbReference type="GO" id="GO:0048144">
    <property type="term" value="P:fibroblast proliferation"/>
    <property type="evidence" value="ECO:0000315"/>
    <property type="project" value="RGD"/>
</dbReference>
<dbReference type="GO" id="GO:0010467">
    <property type="term" value="P:gene expression"/>
    <property type="evidence" value="ECO:0000266"/>
    <property type="project" value="RGD"/>
</dbReference>
<dbReference type="GO" id="GO:0072011">
    <property type="term" value="P:glomerular endothelium development"/>
    <property type="evidence" value="ECO:0000266"/>
    <property type="project" value="RGD"/>
</dbReference>
<dbReference type="GO" id="GO:0003094">
    <property type="term" value="P:glomerular filtration"/>
    <property type="evidence" value="ECO:0000315"/>
    <property type="project" value="RGD"/>
</dbReference>
<dbReference type="GO" id="GO:0032835">
    <property type="term" value="P:glomerulus development"/>
    <property type="evidence" value="ECO:0000266"/>
    <property type="project" value="RGD"/>
</dbReference>
<dbReference type="GO" id="GO:0060322">
    <property type="term" value="P:head development"/>
    <property type="evidence" value="ECO:0000266"/>
    <property type="project" value="RGD"/>
</dbReference>
<dbReference type="GO" id="GO:0007507">
    <property type="term" value="P:heart development"/>
    <property type="evidence" value="ECO:0000266"/>
    <property type="project" value="RGD"/>
</dbReference>
<dbReference type="GO" id="GO:0003015">
    <property type="term" value="P:heart process"/>
    <property type="evidence" value="ECO:0000266"/>
    <property type="project" value="RGD"/>
</dbReference>
<dbReference type="GO" id="GO:0030202">
    <property type="term" value="P:heparin proteoglycan metabolic process"/>
    <property type="evidence" value="ECO:0000266"/>
    <property type="project" value="RGD"/>
</dbReference>
<dbReference type="GO" id="GO:0001821">
    <property type="term" value="P:histamine secretion"/>
    <property type="evidence" value="ECO:0000315"/>
    <property type="project" value="RGD"/>
</dbReference>
<dbReference type="GO" id="GO:0001701">
    <property type="term" value="P:in utero embryonic development"/>
    <property type="evidence" value="ECO:0000266"/>
    <property type="project" value="RGD"/>
</dbReference>
<dbReference type="GO" id="GO:0006874">
    <property type="term" value="P:intracellular calcium ion homeostasis"/>
    <property type="evidence" value="ECO:0000266"/>
    <property type="project" value="RGD"/>
</dbReference>
<dbReference type="GO" id="GO:0003220">
    <property type="term" value="P:left ventricular cardiac muscle tissue morphogenesis"/>
    <property type="evidence" value="ECO:0000266"/>
    <property type="project" value="RGD"/>
</dbReference>
<dbReference type="GO" id="GO:0060137">
    <property type="term" value="P:maternal process involved in parturition"/>
    <property type="evidence" value="ECO:0000270"/>
    <property type="project" value="RGD"/>
</dbReference>
<dbReference type="GO" id="GO:1903537">
    <property type="term" value="P:meiotic cell cycle process involved in oocyte maturation"/>
    <property type="evidence" value="ECO:0000266"/>
    <property type="project" value="RGD"/>
</dbReference>
<dbReference type="GO" id="GO:0097152">
    <property type="term" value="P:mesenchymal cell apoptotic process"/>
    <property type="evidence" value="ECO:0000266"/>
    <property type="project" value="RGD"/>
</dbReference>
<dbReference type="GO" id="GO:0042474">
    <property type="term" value="P:middle ear morphogenesis"/>
    <property type="evidence" value="ECO:0000266"/>
    <property type="project" value="RGD"/>
</dbReference>
<dbReference type="GO" id="GO:0007005">
    <property type="term" value="P:mitochondrion organization"/>
    <property type="evidence" value="ECO:0000266"/>
    <property type="project" value="RGD"/>
</dbReference>
<dbReference type="GO" id="GO:0000278">
    <property type="term" value="P:mitotic cell cycle"/>
    <property type="evidence" value="ECO:0000266"/>
    <property type="project" value="RGD"/>
</dbReference>
<dbReference type="GO" id="GO:0043066">
    <property type="term" value="P:negative regulation of apoptotic process"/>
    <property type="evidence" value="ECO:0000315"/>
    <property type="project" value="RGD"/>
</dbReference>
<dbReference type="GO" id="GO:0014032">
    <property type="term" value="P:neural crest cell development"/>
    <property type="evidence" value="ECO:0000266"/>
    <property type="project" value="RGD"/>
</dbReference>
<dbReference type="GO" id="GO:0014033">
    <property type="term" value="P:neural crest cell differentiation"/>
    <property type="evidence" value="ECO:0000266"/>
    <property type="project" value="RGD"/>
</dbReference>
<dbReference type="GO" id="GO:0014034">
    <property type="term" value="P:neural crest cell fate commitment"/>
    <property type="evidence" value="ECO:0000266"/>
    <property type="project" value="RGD"/>
</dbReference>
<dbReference type="GO" id="GO:0050905">
    <property type="term" value="P:neuromuscular process"/>
    <property type="evidence" value="ECO:0000266"/>
    <property type="project" value="RGD"/>
</dbReference>
<dbReference type="GO" id="GO:0031175">
    <property type="term" value="P:neuron projection development"/>
    <property type="evidence" value="ECO:0000266"/>
    <property type="project" value="RGD"/>
</dbReference>
<dbReference type="GO" id="GO:0016322">
    <property type="term" value="P:neuron remodeling"/>
    <property type="evidence" value="ECO:0000266"/>
    <property type="project" value="RGD"/>
</dbReference>
<dbReference type="GO" id="GO:0003357">
    <property type="term" value="P:noradrenergic neuron differentiation"/>
    <property type="evidence" value="ECO:0000266"/>
    <property type="project" value="RGD"/>
</dbReference>
<dbReference type="GO" id="GO:0042415">
    <property type="term" value="P:norepinephrine metabolic process"/>
    <property type="evidence" value="ECO:0000266"/>
    <property type="project" value="RGD"/>
</dbReference>
<dbReference type="GO" id="GO:0061626">
    <property type="term" value="P:pharyngeal arch artery morphogenesis"/>
    <property type="evidence" value="ECO:0000266"/>
    <property type="project" value="RGD"/>
</dbReference>
<dbReference type="GO" id="GO:0007200">
    <property type="term" value="P:phospholipase C-activating G protein-coupled receptor signaling pathway"/>
    <property type="evidence" value="ECO:0000315"/>
    <property type="project" value="RGD"/>
</dbReference>
<dbReference type="GO" id="GO:1903210">
    <property type="term" value="P:podocyte apoptotic process"/>
    <property type="evidence" value="ECO:0000266"/>
    <property type="project" value="RGD"/>
</dbReference>
<dbReference type="GO" id="GO:0072112">
    <property type="term" value="P:podocyte differentiation"/>
    <property type="evidence" value="ECO:0000266"/>
    <property type="project" value="RGD"/>
</dbReference>
<dbReference type="GO" id="GO:0051928">
    <property type="term" value="P:positive regulation of calcium ion transport"/>
    <property type="evidence" value="ECO:0000315"/>
    <property type="project" value="RGD"/>
</dbReference>
<dbReference type="GO" id="GO:0043123">
    <property type="term" value="P:positive regulation of canonical NF-kappaB signal transduction"/>
    <property type="evidence" value="ECO:0000266"/>
    <property type="project" value="RGD"/>
</dbReference>
<dbReference type="GO" id="GO:0008284">
    <property type="term" value="P:positive regulation of cell population proliferation"/>
    <property type="evidence" value="ECO:0000315"/>
    <property type="project" value="RGD"/>
</dbReference>
<dbReference type="GO" id="GO:0007204">
    <property type="term" value="P:positive regulation of cytosolic calcium ion concentration"/>
    <property type="evidence" value="ECO:0000314"/>
    <property type="project" value="RGD"/>
</dbReference>
<dbReference type="GO" id="GO:0070374">
    <property type="term" value="P:positive regulation of ERK1 and ERK2 cascade"/>
    <property type="evidence" value="ECO:0000315"/>
    <property type="project" value="RGD"/>
</dbReference>
<dbReference type="GO" id="GO:0090184">
    <property type="term" value="P:positive regulation of kidney development"/>
    <property type="evidence" value="ECO:0000315"/>
    <property type="project" value="RGD"/>
</dbReference>
<dbReference type="GO" id="GO:0090023">
    <property type="term" value="P:positive regulation of neutrophil chemotaxis"/>
    <property type="evidence" value="ECO:0000315"/>
    <property type="project" value="RGD"/>
</dbReference>
<dbReference type="GO" id="GO:0042482">
    <property type="term" value="P:positive regulation of odontogenesis"/>
    <property type="evidence" value="ECO:0000315"/>
    <property type="project" value="RGD"/>
</dbReference>
<dbReference type="GO" id="GO:0051281">
    <property type="term" value="P:positive regulation of release of sequestered calcium ion into cytosol"/>
    <property type="evidence" value="ECO:0000315"/>
    <property type="project" value="RGD"/>
</dbReference>
<dbReference type="GO" id="GO:0071806">
    <property type="term" value="P:protein transmembrane transport"/>
    <property type="evidence" value="ECO:0000266"/>
    <property type="project" value="RGD"/>
</dbReference>
<dbReference type="GO" id="GO:0008217">
    <property type="term" value="P:regulation of blood pressure"/>
    <property type="evidence" value="ECO:0000266"/>
    <property type="project" value="RGD"/>
</dbReference>
<dbReference type="GO" id="GO:0010827">
    <property type="term" value="P:regulation of D-glucose transmembrane transport"/>
    <property type="evidence" value="ECO:0000266"/>
    <property type="project" value="RGD"/>
</dbReference>
<dbReference type="GO" id="GO:0050678">
    <property type="term" value="P:regulation of epithelial cell proliferation"/>
    <property type="evidence" value="ECO:0000315"/>
    <property type="project" value="RGD"/>
</dbReference>
<dbReference type="GO" id="GO:0002027">
    <property type="term" value="P:regulation of heart rate"/>
    <property type="evidence" value="ECO:0000266"/>
    <property type="project" value="RGD"/>
</dbReference>
<dbReference type="GO" id="GO:1905871">
    <property type="term" value="P:regulation of protein localization to cell leading edge"/>
    <property type="evidence" value="ECO:0000266"/>
    <property type="project" value="RGD"/>
</dbReference>
<dbReference type="GO" id="GO:0097018">
    <property type="term" value="P:renal albumin absorption"/>
    <property type="evidence" value="ECO:0000266"/>
    <property type="project" value="RGD"/>
</dbReference>
<dbReference type="GO" id="GO:0070294">
    <property type="term" value="P:renal sodium ion absorption"/>
    <property type="evidence" value="ECO:0000266"/>
    <property type="project" value="RGD"/>
</dbReference>
<dbReference type="GO" id="GO:0007585">
    <property type="term" value="P:respiratory gaseous exchange by respiratory system"/>
    <property type="evidence" value="ECO:0000266"/>
    <property type="project" value="RGD"/>
</dbReference>
<dbReference type="GO" id="GO:1905144">
    <property type="term" value="P:response to acetylcholine"/>
    <property type="evidence" value="ECO:0000266"/>
    <property type="project" value="RGD"/>
</dbReference>
<dbReference type="GO" id="GO:0001975">
    <property type="term" value="P:response to amphetamine"/>
    <property type="evidence" value="ECO:0000266"/>
    <property type="project" value="RGD"/>
</dbReference>
<dbReference type="GO" id="GO:0001666">
    <property type="term" value="P:response to hypoxia"/>
    <property type="evidence" value="ECO:0000266"/>
    <property type="project" value="RGD"/>
</dbReference>
<dbReference type="GO" id="GO:0032496">
    <property type="term" value="P:response to lipopolysaccharide"/>
    <property type="evidence" value="ECO:0000315"/>
    <property type="project" value="RGD"/>
</dbReference>
<dbReference type="GO" id="GO:0009611">
    <property type="term" value="P:response to wounding"/>
    <property type="evidence" value="ECO:0000266"/>
    <property type="project" value="RGD"/>
</dbReference>
<dbReference type="GO" id="GO:0007266">
    <property type="term" value="P:Rho protein signal transduction"/>
    <property type="evidence" value="ECO:0000315"/>
    <property type="project" value="RGD"/>
</dbReference>
<dbReference type="GO" id="GO:1902287">
    <property type="term" value="P:semaphorin-plexin signaling pathway involved in axon guidance"/>
    <property type="evidence" value="ECO:0000266"/>
    <property type="project" value="RGD"/>
</dbReference>
<dbReference type="GO" id="GO:0048659">
    <property type="term" value="P:smooth muscle cell proliferation"/>
    <property type="evidence" value="ECO:0000315"/>
    <property type="project" value="RGD"/>
</dbReference>
<dbReference type="GO" id="GO:0055078">
    <property type="term" value="P:sodium ion homeostasis"/>
    <property type="evidence" value="ECO:0000266"/>
    <property type="project" value="RGD"/>
</dbReference>
<dbReference type="GO" id="GO:0048485">
    <property type="term" value="P:sympathetic nervous system development"/>
    <property type="evidence" value="ECO:0000266"/>
    <property type="project" value="RGD"/>
</dbReference>
<dbReference type="GO" id="GO:0097492">
    <property type="term" value="P:sympathetic neuron axon guidance"/>
    <property type="evidence" value="ECO:0000266"/>
    <property type="project" value="RGD"/>
</dbReference>
<dbReference type="GO" id="GO:0030878">
    <property type="term" value="P:thyroid gland development"/>
    <property type="evidence" value="ECO:0000266"/>
    <property type="project" value="RGD"/>
</dbReference>
<dbReference type="GO" id="GO:0097084">
    <property type="term" value="P:vascular associated smooth muscle cell development"/>
    <property type="evidence" value="ECO:0000266"/>
    <property type="project" value="RGD"/>
</dbReference>
<dbReference type="GO" id="GO:0042310">
    <property type="term" value="P:vasoconstriction"/>
    <property type="evidence" value="ECO:0000315"/>
    <property type="project" value="RGD"/>
</dbReference>
<dbReference type="CDD" id="cd15975">
    <property type="entry name" value="7tmA_ET-AR"/>
    <property type="match status" value="1"/>
</dbReference>
<dbReference type="FunFam" id="1.20.1070.10:FF:000076">
    <property type="entry name" value="Endothelin receptor type B"/>
    <property type="match status" value="1"/>
</dbReference>
<dbReference type="Gene3D" id="1.20.1070.10">
    <property type="entry name" value="Rhodopsin 7-helix transmembrane proteins"/>
    <property type="match status" value="1"/>
</dbReference>
<dbReference type="InterPro" id="IPR000499">
    <property type="entry name" value="Endthln_rcpt"/>
</dbReference>
<dbReference type="InterPro" id="IPR002175">
    <property type="entry name" value="ETA_rcpt"/>
</dbReference>
<dbReference type="InterPro" id="IPR051193">
    <property type="entry name" value="GPCR_endothelin_rcpt"/>
</dbReference>
<dbReference type="InterPro" id="IPR000276">
    <property type="entry name" value="GPCR_Rhodpsn"/>
</dbReference>
<dbReference type="InterPro" id="IPR017452">
    <property type="entry name" value="GPCR_Rhodpsn_7TM"/>
</dbReference>
<dbReference type="PANTHER" id="PTHR46099:SF2">
    <property type="entry name" value="ENDOTHELIN-1 RECEPTOR"/>
    <property type="match status" value="1"/>
</dbReference>
<dbReference type="PANTHER" id="PTHR46099">
    <property type="entry name" value="G_PROTEIN_RECEP_F1_2 DOMAIN-CONTAINING PROTEIN"/>
    <property type="match status" value="1"/>
</dbReference>
<dbReference type="Pfam" id="PF00001">
    <property type="entry name" value="7tm_1"/>
    <property type="match status" value="1"/>
</dbReference>
<dbReference type="PRINTS" id="PR00570">
    <property type="entry name" value="ENDOTHELINAR"/>
</dbReference>
<dbReference type="PRINTS" id="PR00366">
    <property type="entry name" value="ENDOTHELINR"/>
</dbReference>
<dbReference type="PRINTS" id="PR00237">
    <property type="entry name" value="GPCRRHODOPSN"/>
</dbReference>
<dbReference type="SUPFAM" id="SSF81321">
    <property type="entry name" value="Family A G protein-coupled receptor-like"/>
    <property type="match status" value="1"/>
</dbReference>
<dbReference type="PROSITE" id="PS00237">
    <property type="entry name" value="G_PROTEIN_RECEP_F1_1"/>
    <property type="match status" value="1"/>
</dbReference>
<dbReference type="PROSITE" id="PS50262">
    <property type="entry name" value="G_PROTEIN_RECEP_F1_2"/>
    <property type="match status" value="1"/>
</dbReference>
<feature type="signal peptide" evidence="3">
    <location>
        <begin position="1"/>
        <end position="20"/>
    </location>
</feature>
<feature type="chain" id="PRO_0000012724" description="Endothelin-1 receptor">
    <location>
        <begin position="21"/>
        <end position="426"/>
    </location>
</feature>
<feature type="topological domain" description="Extracellular" evidence="3">
    <location>
        <begin position="21"/>
        <end position="80"/>
    </location>
</feature>
<feature type="transmembrane region" description="Helical; Name=1" evidence="3">
    <location>
        <begin position="81"/>
        <end position="102"/>
    </location>
</feature>
<feature type="topological domain" description="Cytoplasmic" evidence="3">
    <location>
        <begin position="103"/>
        <end position="112"/>
    </location>
</feature>
<feature type="transmembrane region" description="Helical; Name=2" evidence="3">
    <location>
        <begin position="113"/>
        <end position="132"/>
    </location>
</feature>
<feature type="topological domain" description="Extracellular" evidence="3">
    <location>
        <begin position="133"/>
        <end position="159"/>
    </location>
</feature>
<feature type="transmembrane region" description="Helical; Name=3" evidence="3">
    <location>
        <begin position="160"/>
        <end position="181"/>
    </location>
</feature>
<feature type="topological domain" description="Cytoplasmic" evidence="3">
    <location>
        <begin position="182"/>
        <end position="205"/>
    </location>
</feature>
<feature type="transmembrane region" description="Helical; Name=4" evidence="3">
    <location>
        <begin position="206"/>
        <end position="229"/>
    </location>
</feature>
<feature type="topological domain" description="Extracellular" evidence="3">
    <location>
        <begin position="230"/>
        <end position="256"/>
    </location>
</feature>
<feature type="transmembrane region" description="Helical; Name=5" evidence="3">
    <location>
        <begin position="257"/>
        <end position="278"/>
    </location>
</feature>
<feature type="topological domain" description="Cytoplasmic" evidence="3">
    <location>
        <begin position="279"/>
        <end position="306"/>
    </location>
</feature>
<feature type="transmembrane region" description="Helical; Name=6" evidence="3">
    <location>
        <begin position="307"/>
        <end position="328"/>
    </location>
</feature>
<feature type="topological domain" description="Extracellular" evidence="3">
    <location>
        <begin position="329"/>
        <end position="347"/>
    </location>
</feature>
<feature type="transmembrane region" description="Helical; Name=7" evidence="3">
    <location>
        <begin position="348"/>
        <end position="372"/>
    </location>
</feature>
<feature type="topological domain" description="Cytoplasmic" evidence="3">
    <location>
        <begin position="373"/>
        <end position="426"/>
    </location>
</feature>
<feature type="modified residue" description="Phosphoserine" evidence="2">
    <location>
        <position position="424"/>
    </location>
</feature>
<feature type="glycosylation site" description="N-linked (GlcNAc...) asparagine" evidence="3">
    <location>
        <position position="29"/>
    </location>
</feature>
<feature type="glycosylation site" description="N-linked (GlcNAc...) asparagine" evidence="3">
    <location>
        <position position="62"/>
    </location>
</feature>
<feature type="disulfide bond" evidence="4">
    <location>
        <begin position="158"/>
        <end position="239"/>
    </location>
</feature>
<feature type="sequence conflict" description="In Ref. 2; AAA41114." evidence="5" ref="2">
    <original>N</original>
    <variation>D</variation>
    <location>
        <position position="46"/>
    </location>
</feature>
<feature type="sequence conflict" description="In Ref. 2; AAA41114." evidence="5" ref="2">
    <original>Q</original>
    <variation>R</variation>
    <location>
        <position position="53"/>
    </location>
</feature>
<organism>
    <name type="scientific">Rattus norvegicus</name>
    <name type="common">Rat</name>
    <dbReference type="NCBI Taxonomy" id="10116"/>
    <lineage>
        <taxon>Eukaryota</taxon>
        <taxon>Metazoa</taxon>
        <taxon>Chordata</taxon>
        <taxon>Craniata</taxon>
        <taxon>Vertebrata</taxon>
        <taxon>Euteleostomi</taxon>
        <taxon>Mammalia</taxon>
        <taxon>Eutheria</taxon>
        <taxon>Euarchontoglires</taxon>
        <taxon>Glires</taxon>
        <taxon>Rodentia</taxon>
        <taxon>Myomorpha</taxon>
        <taxon>Muroidea</taxon>
        <taxon>Muridae</taxon>
        <taxon>Murinae</taxon>
        <taxon>Rattus</taxon>
    </lineage>
</organism>
<name>EDNRA_RAT</name>
<evidence type="ECO:0000250" key="1"/>
<evidence type="ECO:0000250" key="2">
    <source>
        <dbReference type="UniProtKB" id="P28088"/>
    </source>
</evidence>
<evidence type="ECO:0000255" key="3"/>
<evidence type="ECO:0000255" key="4">
    <source>
        <dbReference type="PROSITE-ProRule" id="PRU00521"/>
    </source>
</evidence>
<evidence type="ECO:0000305" key="5"/>
<evidence type="ECO:0000312" key="6">
    <source>
        <dbReference type="RGD" id="2535"/>
    </source>
</evidence>
<sequence length="426" mass="48245">MGVLCFLASFWLALVGGAIADNAERYSANLSSHVEDFTPFPGTEFNFLGTTLQPPNLALPSNGSMHGYCPQQTKITTAFKYINTVISCTIFIVGMVGNATLLRIIYQNKCMRNGPNALIASLALGDLIYVVIDLPINVFKLLAGRWPFDHNDFGVFLCKLFPFLQKSSVGITVLNLCALSVDRYRAVASWSRVQGIGIPLITAIEIVSIWILSFILAIPEAIGFVMVPFEYKGEQHRTCMLNATTKFMEFYQDVKDWWLFGFYFCMPLVCTAIFYTLMTCEMLNRRNGSLRIALSEHLKQRREVAKTVFCLVVIFALCWFPLHLSRILKKTVYDEMDKNRCELLSFLLLMDYIGINLATMNSCINPIALYFVSKKFKNCFQSCLCCCCHQSKSLMTSVPMNGTSIQWKNQEQNHNTERSSHKDSMN</sequence>
<proteinExistence type="evidence at transcript level"/>
<keyword id="KW-1003">Cell membrane</keyword>
<keyword id="KW-1015">Disulfide bond</keyword>
<keyword id="KW-0297">G-protein coupled receptor</keyword>
<keyword id="KW-0325">Glycoprotein</keyword>
<keyword id="KW-0472">Membrane</keyword>
<keyword id="KW-0597">Phosphoprotein</keyword>
<keyword id="KW-0675">Receptor</keyword>
<keyword id="KW-1185">Reference proteome</keyword>
<keyword id="KW-0732">Signal</keyword>
<keyword id="KW-0807">Transducer</keyword>
<keyword id="KW-0812">Transmembrane</keyword>
<keyword id="KW-1133">Transmembrane helix</keyword>